<name>IGF2A_XENLA</name>
<protein>
    <recommendedName>
        <fullName evidence="6">Insulin-like growth factor 2.S</fullName>
    </recommendedName>
    <alternativeName>
        <fullName>Insulin-like growth factor 2-A</fullName>
        <shortName evidence="5">xIGF-2</shortName>
    </alternativeName>
    <alternativeName>
        <fullName>Insulin-like growth factor II-A</fullName>
        <shortName>IGF-II-A</shortName>
    </alternativeName>
</protein>
<reference evidence="6 8" key="1">
    <citation type="journal article" date="2001" name="Dev. Cell">
        <title>Neural and head induction by insulin-like growth factor signals.</title>
        <authorList>
            <person name="Pera E.M."/>
            <person name="Wessely O."/>
            <person name="Li S.-Y."/>
            <person name="De Robertis E.M."/>
        </authorList>
    </citation>
    <scope>NUCLEOTIDE SEQUENCE [MRNA]</scope>
    <scope>FUNCTION</scope>
    <scope>DEVELOPMENTAL STAGE</scope>
</reference>
<reference evidence="7" key="2">
    <citation type="submission" date="2004-05" db="EMBL/GenBank/DDBJ databases">
        <authorList>
            <consortium name="NIH - Xenopus Gene Collection (XGC) project"/>
        </authorList>
    </citation>
    <scope>NUCLEOTIDE SEQUENCE [LARGE SCALE MRNA]</scope>
    <source>
        <tissue evidence="7">Liver</tissue>
    </source>
</reference>
<sequence>MEQLSCKHRSSSVEAEAQLCRQTESRSTQLPRMSVMRHLFLLSITFLVYTLDSAKAYRATETLCGGELVDTLQFVCGDRGFYFSTNNGRSNRRPNRGIVDVCCFKSCDLELLETYCAKPTKNERDVSTAPATAIPPLSKQDLYHKHHHTKSSKYDIWQRKSIHRLRRGVPAIVRARQYRLLMEKAEEAEQALSHRPLTTLPITRPLRLQQASEPSHN</sequence>
<organism>
    <name type="scientific">Xenopus laevis</name>
    <name type="common">African clawed frog</name>
    <dbReference type="NCBI Taxonomy" id="8355"/>
    <lineage>
        <taxon>Eukaryota</taxon>
        <taxon>Metazoa</taxon>
        <taxon>Chordata</taxon>
        <taxon>Craniata</taxon>
        <taxon>Vertebrata</taxon>
        <taxon>Euteleostomi</taxon>
        <taxon>Amphibia</taxon>
        <taxon>Batrachia</taxon>
        <taxon>Anura</taxon>
        <taxon>Pipoidea</taxon>
        <taxon>Pipidae</taxon>
        <taxon>Xenopodinae</taxon>
        <taxon>Xenopus</taxon>
        <taxon>Xenopus</taxon>
    </lineage>
</organism>
<gene>
    <name evidence="6" type="primary">igf2.S</name>
    <name type="synonym">igf2-a</name>
</gene>
<feature type="signal peptide" evidence="3">
    <location>
        <begin position="1"/>
        <end position="56"/>
    </location>
</feature>
<feature type="chain" id="PRO_0000224639" description="Insulin-like growth factor 2.S" evidence="3">
    <location>
        <begin position="57"/>
        <end position="123"/>
    </location>
</feature>
<feature type="propeptide" id="PRO_0000224640" description="E peptide" evidence="3">
    <location>
        <begin position="124"/>
        <end position="217"/>
    </location>
</feature>
<feature type="region of interest" description="B" evidence="3">
    <location>
        <begin position="57"/>
        <end position="83"/>
    </location>
</feature>
<feature type="region of interest" description="C" evidence="3">
    <location>
        <begin position="84"/>
        <end position="96"/>
    </location>
</feature>
<feature type="region of interest" description="A" evidence="3">
    <location>
        <begin position="97"/>
        <end position="117"/>
    </location>
</feature>
<feature type="region of interest" description="D" evidence="3">
    <location>
        <begin position="118"/>
        <end position="123"/>
    </location>
</feature>
<feature type="site" description="Important for interaction with integrin" evidence="2">
    <location>
        <position position="79"/>
    </location>
</feature>
<feature type="site" description="Important for interaction with integrin" evidence="2">
    <location>
        <position position="89"/>
    </location>
</feature>
<feature type="site" description="Important for interaction with integrin" evidence="2">
    <location>
        <position position="92"/>
    </location>
</feature>
<feature type="site" description="Important for interaction with integrin" evidence="2">
    <location>
        <position position="93"/>
    </location>
</feature>
<feature type="disulfide bond" evidence="2">
    <location>
        <begin position="64"/>
        <end position="103"/>
    </location>
</feature>
<feature type="disulfide bond" evidence="2">
    <location>
        <begin position="76"/>
        <end position="116"/>
    </location>
</feature>
<feature type="disulfide bond" evidence="2">
    <location>
        <begin position="102"/>
        <end position="107"/>
    </location>
</feature>
<dbReference type="EMBL" id="AY050645">
    <property type="protein sequence ID" value="AAL11445.1"/>
    <property type="molecule type" value="mRNA"/>
</dbReference>
<dbReference type="EMBL" id="BC070545">
    <property type="protein sequence ID" value="AAH70545.1"/>
    <property type="status" value="ALT_INIT"/>
    <property type="molecule type" value="mRNA"/>
</dbReference>
<dbReference type="RefSeq" id="NP_001082128.1">
    <property type="nucleotide sequence ID" value="NM_001088659.1"/>
</dbReference>
<dbReference type="RefSeq" id="XP_018114956.1">
    <property type="nucleotide sequence ID" value="XM_018259467.1"/>
</dbReference>
<dbReference type="SMR" id="Q90WW4"/>
<dbReference type="DNASU" id="398240"/>
<dbReference type="GeneID" id="398240"/>
<dbReference type="KEGG" id="xla:398240"/>
<dbReference type="AGR" id="Xenbase:XB-GENE-6251806"/>
<dbReference type="CTD" id="398240"/>
<dbReference type="Xenbase" id="XB-GENE-6251806">
    <property type="gene designation" value="igf2.S"/>
</dbReference>
<dbReference type="OMA" id="FFRDESW"/>
<dbReference type="OrthoDB" id="9449995at2759"/>
<dbReference type="Proteomes" id="UP000186698">
    <property type="component" value="Chromosome 4S"/>
</dbReference>
<dbReference type="Bgee" id="398240">
    <property type="expression patterns" value="Expressed in internal ear and 16 other cell types or tissues"/>
</dbReference>
<dbReference type="GO" id="GO:0005576">
    <property type="term" value="C:extracellular region"/>
    <property type="evidence" value="ECO:0000303"/>
    <property type="project" value="UniProtKB"/>
</dbReference>
<dbReference type="GO" id="GO:0005615">
    <property type="term" value="C:extracellular space"/>
    <property type="evidence" value="ECO:0000318"/>
    <property type="project" value="GO_Central"/>
</dbReference>
<dbReference type="GO" id="GO:0008083">
    <property type="term" value="F:growth factor activity"/>
    <property type="evidence" value="ECO:0000314"/>
    <property type="project" value="UniProtKB"/>
</dbReference>
<dbReference type="GO" id="GO:0005179">
    <property type="term" value="F:hormone activity"/>
    <property type="evidence" value="ECO:0007669"/>
    <property type="project" value="InterPro"/>
</dbReference>
<dbReference type="GO" id="GO:0005159">
    <property type="term" value="F:insulin-like growth factor receptor binding"/>
    <property type="evidence" value="ECO:0000318"/>
    <property type="project" value="GO_Central"/>
</dbReference>
<dbReference type="GO" id="GO:0005178">
    <property type="term" value="F:integrin binding"/>
    <property type="evidence" value="ECO:0000250"/>
    <property type="project" value="UniProtKB"/>
</dbReference>
<dbReference type="GO" id="GO:0043539">
    <property type="term" value="F:protein serine/threonine kinase activator activity"/>
    <property type="evidence" value="ECO:0000318"/>
    <property type="project" value="GO_Central"/>
</dbReference>
<dbReference type="GO" id="GO:0030154">
    <property type="term" value="P:cell differentiation"/>
    <property type="evidence" value="ECO:0007669"/>
    <property type="project" value="UniProtKB-KW"/>
</dbReference>
<dbReference type="GO" id="GO:0060323">
    <property type="term" value="P:head morphogenesis"/>
    <property type="evidence" value="ECO:0000314"/>
    <property type="project" value="UniProtKB"/>
</dbReference>
<dbReference type="GO" id="GO:0007399">
    <property type="term" value="P:nervous system development"/>
    <property type="evidence" value="ECO:0000314"/>
    <property type="project" value="UniProtKB"/>
</dbReference>
<dbReference type="GO" id="GO:0042104">
    <property type="term" value="P:positive regulation of activated T cell proliferation"/>
    <property type="evidence" value="ECO:0000318"/>
    <property type="project" value="GO_Central"/>
</dbReference>
<dbReference type="GO" id="GO:0008284">
    <property type="term" value="P:positive regulation of cell population proliferation"/>
    <property type="evidence" value="ECO:0000250"/>
    <property type="project" value="UniProtKB"/>
</dbReference>
<dbReference type="GO" id="GO:0046628">
    <property type="term" value="P:positive regulation of insulin receptor signaling pathway"/>
    <property type="evidence" value="ECO:0000318"/>
    <property type="project" value="GO_Central"/>
</dbReference>
<dbReference type="GO" id="GO:0043410">
    <property type="term" value="P:positive regulation of MAPK cascade"/>
    <property type="evidence" value="ECO:0000318"/>
    <property type="project" value="GO_Central"/>
</dbReference>
<dbReference type="GO" id="GO:0045944">
    <property type="term" value="P:positive regulation of transcription by RNA polymerase II"/>
    <property type="evidence" value="ECO:0000318"/>
    <property type="project" value="GO_Central"/>
</dbReference>
<dbReference type="GO" id="GO:1905564">
    <property type="term" value="P:positive regulation of vascular endothelial cell proliferation"/>
    <property type="evidence" value="ECO:0000318"/>
    <property type="project" value="GO_Central"/>
</dbReference>
<dbReference type="GO" id="GO:0051147">
    <property type="term" value="P:regulation of muscle cell differentiation"/>
    <property type="evidence" value="ECO:0000318"/>
    <property type="project" value="GO_Central"/>
</dbReference>
<dbReference type="CDD" id="cd04368">
    <property type="entry name" value="IlGF"/>
    <property type="match status" value="1"/>
</dbReference>
<dbReference type="FunFam" id="1.10.100.10:FF:000002">
    <property type="entry name" value="Insulin-like growth factor II preproprotein"/>
    <property type="match status" value="1"/>
</dbReference>
<dbReference type="Gene3D" id="1.10.100.10">
    <property type="entry name" value="Insulin-like"/>
    <property type="match status" value="1"/>
</dbReference>
<dbReference type="InterPro" id="IPR022334">
    <property type="entry name" value="IGF2"/>
</dbReference>
<dbReference type="InterPro" id="IPR013576">
    <property type="entry name" value="IGF2_C"/>
</dbReference>
<dbReference type="InterPro" id="IPR016179">
    <property type="entry name" value="Insulin-like"/>
</dbReference>
<dbReference type="InterPro" id="IPR022350">
    <property type="entry name" value="Insulin-like_growth_factor"/>
</dbReference>
<dbReference type="InterPro" id="IPR036438">
    <property type="entry name" value="Insulin-like_sf"/>
</dbReference>
<dbReference type="InterPro" id="IPR022353">
    <property type="entry name" value="Insulin_CS"/>
</dbReference>
<dbReference type="InterPro" id="IPR022352">
    <property type="entry name" value="Insulin_family"/>
</dbReference>
<dbReference type="PANTHER" id="PTHR46886">
    <property type="entry name" value="INSULIN-LIKE GROWTH FACTOR II"/>
    <property type="match status" value="1"/>
</dbReference>
<dbReference type="PANTHER" id="PTHR46886:SF3">
    <property type="entry name" value="INSULIN-LIKE GROWTH FACTOR II-A"/>
    <property type="match status" value="1"/>
</dbReference>
<dbReference type="Pfam" id="PF08365">
    <property type="entry name" value="IGF2_C"/>
    <property type="match status" value="1"/>
</dbReference>
<dbReference type="Pfam" id="PF00049">
    <property type="entry name" value="Insulin"/>
    <property type="match status" value="1"/>
</dbReference>
<dbReference type="PRINTS" id="PR02002">
    <property type="entry name" value="INSLNLIKEGF"/>
</dbReference>
<dbReference type="PRINTS" id="PR02006">
    <property type="entry name" value="INSLNLIKEGF2"/>
</dbReference>
<dbReference type="PRINTS" id="PR00276">
    <property type="entry name" value="INSULINFAMLY"/>
</dbReference>
<dbReference type="SMART" id="SM00078">
    <property type="entry name" value="IlGF"/>
    <property type="match status" value="1"/>
</dbReference>
<dbReference type="SUPFAM" id="SSF56994">
    <property type="entry name" value="Insulin-like"/>
    <property type="match status" value="1"/>
</dbReference>
<dbReference type="PROSITE" id="PS00262">
    <property type="entry name" value="INSULIN"/>
    <property type="match status" value="1"/>
</dbReference>
<keyword id="KW-0217">Developmental protein</keyword>
<keyword id="KW-0221">Differentiation</keyword>
<keyword id="KW-1015">Disulfide bond</keyword>
<keyword id="KW-0339">Growth factor</keyword>
<keyword id="KW-0524">Neurogenesis</keyword>
<keyword id="KW-1185">Reference proteome</keyword>
<keyword id="KW-0964">Secreted</keyword>
<keyword id="KW-0732">Signal</keyword>
<accession>Q90WW4</accession>
<accession>Q6NS08</accession>
<proteinExistence type="evidence at transcript level"/>
<evidence type="ECO:0000250" key="1"/>
<evidence type="ECO:0000250" key="2">
    <source>
        <dbReference type="UniProtKB" id="P01344"/>
    </source>
</evidence>
<evidence type="ECO:0000255" key="3"/>
<evidence type="ECO:0000269" key="4">
    <source>
    </source>
</evidence>
<evidence type="ECO:0000303" key="5">
    <source>
    </source>
</evidence>
<evidence type="ECO:0000305" key="6"/>
<evidence type="ECO:0000312" key="7">
    <source>
        <dbReference type="EMBL" id="AAH70545.1"/>
    </source>
</evidence>
<evidence type="ECO:0000312" key="8">
    <source>
        <dbReference type="EMBL" id="AAL11445.1"/>
    </source>
</evidence>
<comment type="function">
    <text evidence="2 4">The insulin-like growth factors, isolated from plasma, are structurally and functionally related to insulin but have a much higher growth-promoting activity. Promotes anterior neural development (PubMed:11709186). Acts as a ligand for integrin which is required for IGF2 signaling (By similarity).</text>
</comment>
<comment type="subcellular location">
    <subcellularLocation>
        <location evidence="1">Secreted</location>
    </subcellularLocation>
</comment>
<comment type="developmental stage">
    <text evidence="4">Expressed both maternally and zygotically. Expressed in the dorsal midline during gastrulation and neurulation.</text>
</comment>
<comment type="similarity">
    <text evidence="3">Belongs to the insulin family.</text>
</comment>
<comment type="sequence caution" evidence="6">
    <conflict type="erroneous initiation">
        <sequence resource="EMBL-CDS" id="AAH70545"/>
    </conflict>
</comment>